<dbReference type="EMBL" id="DQ398586">
    <property type="protein sequence ID" value="ABD59319.1"/>
    <property type="molecule type" value="mRNA"/>
</dbReference>
<dbReference type="RefSeq" id="NP_001089158.1">
    <property type="nucleotide sequence ID" value="NM_001095689.1"/>
</dbReference>
<dbReference type="GeneID" id="734194"/>
<dbReference type="KEGG" id="xla:734194"/>
<dbReference type="AGR" id="Xenbase:XB-GENE-490228"/>
<dbReference type="CTD" id="734194"/>
<dbReference type="Xenbase" id="XB-GENE-490228">
    <property type="gene designation" value="shroom3.L"/>
</dbReference>
<dbReference type="OrthoDB" id="10063560at2759"/>
<dbReference type="Proteomes" id="UP000186698">
    <property type="component" value="Chromosome 1L"/>
</dbReference>
<dbReference type="Bgee" id="734194">
    <property type="expression patterns" value="Expressed in heart and 14 other cell types or tissues"/>
</dbReference>
<dbReference type="GO" id="GO:0005912">
    <property type="term" value="C:adherens junction"/>
    <property type="evidence" value="ECO:0000250"/>
    <property type="project" value="HGNC-UCL"/>
</dbReference>
<dbReference type="GO" id="GO:0043296">
    <property type="term" value="C:apical junction complex"/>
    <property type="evidence" value="ECO:0000318"/>
    <property type="project" value="GO_Central"/>
</dbReference>
<dbReference type="GO" id="GO:0016324">
    <property type="term" value="C:apical plasma membrane"/>
    <property type="evidence" value="ECO:0000250"/>
    <property type="project" value="HGNC-UCL"/>
</dbReference>
<dbReference type="GO" id="GO:0030864">
    <property type="term" value="C:cortical actin cytoskeleton"/>
    <property type="evidence" value="ECO:0000318"/>
    <property type="project" value="GO_Central"/>
</dbReference>
<dbReference type="GO" id="GO:0005856">
    <property type="term" value="C:cytoskeleton"/>
    <property type="evidence" value="ECO:0000250"/>
    <property type="project" value="HGNC-UCL"/>
</dbReference>
<dbReference type="GO" id="GO:0005874">
    <property type="term" value="C:microtubule"/>
    <property type="evidence" value="ECO:0007669"/>
    <property type="project" value="UniProtKB-KW"/>
</dbReference>
<dbReference type="GO" id="GO:0003779">
    <property type="term" value="F:actin binding"/>
    <property type="evidence" value="ECO:0000250"/>
    <property type="project" value="HGNC-UCL"/>
</dbReference>
<dbReference type="GO" id="GO:0051015">
    <property type="term" value="F:actin filament binding"/>
    <property type="evidence" value="ECO:0000318"/>
    <property type="project" value="GO_Central"/>
</dbReference>
<dbReference type="GO" id="GO:0007015">
    <property type="term" value="P:actin filament organization"/>
    <property type="evidence" value="ECO:0000318"/>
    <property type="project" value="GO_Central"/>
</dbReference>
<dbReference type="GO" id="GO:0045176">
    <property type="term" value="P:apical protein localization"/>
    <property type="evidence" value="ECO:0000314"/>
    <property type="project" value="HGNC-UCL"/>
</dbReference>
<dbReference type="GO" id="GO:0000902">
    <property type="term" value="P:cell morphogenesis"/>
    <property type="evidence" value="ECO:0000315"/>
    <property type="project" value="HGNC-UCL"/>
</dbReference>
<dbReference type="GO" id="GO:0043482">
    <property type="term" value="P:cellular pigment accumulation"/>
    <property type="evidence" value="ECO:0000315"/>
    <property type="project" value="HGNC-UCL"/>
</dbReference>
<dbReference type="GO" id="GO:0007389">
    <property type="term" value="P:pattern specification process"/>
    <property type="evidence" value="ECO:0000250"/>
    <property type="project" value="HGNC-UCL"/>
</dbReference>
<dbReference type="GO" id="GO:0008360">
    <property type="term" value="P:regulation of cell shape"/>
    <property type="evidence" value="ECO:0007669"/>
    <property type="project" value="UniProtKB-KW"/>
</dbReference>
<dbReference type="Gene3D" id="6.10.250.3120">
    <property type="match status" value="1"/>
</dbReference>
<dbReference type="InterPro" id="IPR014800">
    <property type="entry name" value="ASD1_dom"/>
</dbReference>
<dbReference type="InterPro" id="IPR014799">
    <property type="entry name" value="ASD2_dom"/>
</dbReference>
<dbReference type="InterPro" id="IPR027685">
    <property type="entry name" value="Shroom_fam"/>
</dbReference>
<dbReference type="PANTHER" id="PTHR15012">
    <property type="entry name" value="APICAL PROTEIN/SHROOM-RELATED"/>
    <property type="match status" value="1"/>
</dbReference>
<dbReference type="PANTHER" id="PTHR15012:SF33">
    <property type="entry name" value="PROTEIN SHROOM3"/>
    <property type="match status" value="1"/>
</dbReference>
<dbReference type="Pfam" id="PF08688">
    <property type="entry name" value="ASD1"/>
    <property type="match status" value="1"/>
</dbReference>
<dbReference type="Pfam" id="PF08687">
    <property type="entry name" value="ASD2"/>
    <property type="match status" value="1"/>
</dbReference>
<dbReference type="PROSITE" id="PS51306">
    <property type="entry name" value="ASD1"/>
    <property type="match status" value="1"/>
</dbReference>
<dbReference type="PROSITE" id="PS51307">
    <property type="entry name" value="ASD2"/>
    <property type="match status" value="1"/>
</dbReference>
<name>SHRM3_XENLA</name>
<accession>Q27IV2</accession>
<keyword id="KW-0009">Actin-binding</keyword>
<keyword id="KW-0965">Cell junction</keyword>
<keyword id="KW-1003">Cell membrane</keyword>
<keyword id="KW-0133">Cell shape</keyword>
<keyword id="KW-0175">Coiled coil</keyword>
<keyword id="KW-0963">Cytoplasm</keyword>
<keyword id="KW-0206">Cytoskeleton</keyword>
<keyword id="KW-0217">Developmental protein</keyword>
<keyword id="KW-0472">Membrane</keyword>
<keyword id="KW-0493">Microtubule</keyword>
<keyword id="KW-1185">Reference proteome</keyword>
<evidence type="ECO:0000250" key="1"/>
<evidence type="ECO:0000250" key="2">
    <source>
        <dbReference type="UniProtKB" id="Q9QXN0"/>
    </source>
</evidence>
<evidence type="ECO:0000255" key="3"/>
<evidence type="ECO:0000255" key="4">
    <source>
        <dbReference type="PROSITE-ProRule" id="PRU00637"/>
    </source>
</evidence>
<evidence type="ECO:0000255" key="5">
    <source>
        <dbReference type="PROSITE-ProRule" id="PRU00638"/>
    </source>
</evidence>
<evidence type="ECO:0000256" key="6">
    <source>
        <dbReference type="SAM" id="MobiDB-lite"/>
    </source>
</evidence>
<evidence type="ECO:0000269" key="7">
    <source>
    </source>
</evidence>
<evidence type="ECO:0000269" key="8">
    <source>
    </source>
</evidence>
<evidence type="ECO:0000305" key="9"/>
<proteinExistence type="evidence at transcript level"/>
<organism>
    <name type="scientific">Xenopus laevis</name>
    <name type="common">African clawed frog</name>
    <dbReference type="NCBI Taxonomy" id="8355"/>
    <lineage>
        <taxon>Eukaryota</taxon>
        <taxon>Metazoa</taxon>
        <taxon>Chordata</taxon>
        <taxon>Craniata</taxon>
        <taxon>Vertebrata</taxon>
        <taxon>Euteleostomi</taxon>
        <taxon>Amphibia</taxon>
        <taxon>Batrachia</taxon>
        <taxon>Anura</taxon>
        <taxon>Pipoidea</taxon>
        <taxon>Pipidae</taxon>
        <taxon>Xenopodinae</taxon>
        <taxon>Xenopus</taxon>
        <taxon>Xenopus</taxon>
    </lineage>
</organism>
<protein>
    <recommendedName>
        <fullName>Protein Shroom3</fullName>
    </recommendedName>
    <alternativeName>
        <fullName>Shroom-like protein</fullName>
    </alternativeName>
</protein>
<reference key="1">
    <citation type="journal article" date="2007" name="Development">
        <title>Shroom family proteins regulate gamma-tubulin distribution and microtubule architecture during epithelial cell shape change.</title>
        <authorList>
            <person name="Lee C."/>
            <person name="Scherr H.M."/>
            <person name="Wallingford J.B."/>
        </authorList>
    </citation>
    <scope>NUCLEOTIDE SEQUENCE [MRNA]</scope>
    <scope>TISSUE SPECIFICITY</scope>
    <scope>FUNCTION</scope>
</reference>
<reference key="2">
    <citation type="journal article" date="2003" name="Curr. Biol.">
        <title>Shroom induces apical constriction and is required for hingepoint formation during neural tube closure.</title>
        <authorList>
            <person name="Haigo S.L."/>
            <person name="Hildebrand J.D."/>
            <person name="Harland R.M."/>
            <person name="Wallingford J.B."/>
        </authorList>
    </citation>
    <scope>FUNCTION</scope>
    <scope>DEVELOPMENTAL STAGE</scope>
</reference>
<reference key="3">
    <citation type="journal article" date="2006" name="BMC Cell Biol.">
        <title>A new standard nomenclature for proteins related to Apx and Shroom.</title>
        <authorList>
            <person name="Hagens O."/>
            <person name="Ballabio A."/>
            <person name="Kalscheuer V."/>
            <person name="Kraehenbuhl J.-P."/>
            <person name="Schiaffino M.V."/>
            <person name="Smith P."/>
            <person name="Staub O."/>
            <person name="Hildebrand J.D."/>
            <person name="Wallingford J.B."/>
        </authorList>
    </citation>
    <scope>NOMENCLATURE</scope>
</reference>
<comment type="function">
    <text evidence="7 8">Controls cell shape changes in the neuroepithelium during neural tube closure (PubMed:14680628). Induces apical constriction in epithelial cells by promoting the apical accumulation of F-actin and myosin II, and probably by bundling stress fibers (PubMed:14680628). Induces apicobasal cell elongation by redistributing gamma-tubulin and directing the assembly of robust apicobasal microtubule arrays (PubMed:17329357).</text>
</comment>
<comment type="subunit">
    <text evidence="2">Interacts with F-actin. Interacts with ROCK1.</text>
</comment>
<comment type="subcellular location">
    <subcellularLocation>
        <location evidence="2">Cell junction</location>
        <location evidence="2">Adherens junction</location>
    </subcellularLocation>
    <subcellularLocation>
        <location evidence="2">Cytoplasm</location>
        <location evidence="2">Cytoskeleton</location>
    </subcellularLocation>
    <subcellularLocation>
        <location evidence="2">Apical cell membrane</location>
        <topology evidence="2">Peripheral membrane protein</topology>
    </subcellularLocation>
    <text evidence="2">Colocalizes with F-actin in stress fibers and adherens junctions.</text>
</comment>
<comment type="tissue specificity">
    <text evidence="8">Expressed in epithelial cells of the cement gland.</text>
</comment>
<comment type="developmental stage">
    <text evidence="7">Expresseion initiates in the anterior neural plate and extends posteriorly as neurulation proceeds. At the end of neurulation, expressed in the otic and nasal placodes.</text>
</comment>
<comment type="domain">
    <text evidence="1">The ASD1 domain mediates F-actin binding.</text>
</comment>
<comment type="domain">
    <text evidence="2">The ASD2 domain mediates the interaction with ROCK1 and is required for apical constriction induction.</text>
</comment>
<comment type="similarity">
    <text evidence="9">Belongs to the shroom family.</text>
</comment>
<gene>
    <name type="primary">shroom3</name>
    <name type="synonym">shrm</name>
</gene>
<feature type="chain" id="PRO_0000286068" description="Protein Shroom3">
    <location>
        <begin position="1"/>
        <end position="1788"/>
    </location>
</feature>
<feature type="domain" description="ASD1" evidence="4">
    <location>
        <begin position="708"/>
        <end position="811"/>
    </location>
</feature>
<feature type="domain" description="ASD2" evidence="5">
    <location>
        <begin position="1467"/>
        <end position="1756"/>
    </location>
</feature>
<feature type="region of interest" description="Disordered" evidence="6">
    <location>
        <begin position="1"/>
        <end position="25"/>
    </location>
</feature>
<feature type="region of interest" description="Disordered" evidence="6">
    <location>
        <begin position="146"/>
        <end position="174"/>
    </location>
</feature>
<feature type="region of interest" description="Disordered" evidence="6">
    <location>
        <begin position="225"/>
        <end position="263"/>
    </location>
</feature>
<feature type="region of interest" description="Disordered" evidence="6">
    <location>
        <begin position="321"/>
        <end position="367"/>
    </location>
</feature>
<feature type="region of interest" description="Disordered" evidence="6">
    <location>
        <begin position="382"/>
        <end position="401"/>
    </location>
</feature>
<feature type="region of interest" description="Disordered" evidence="6">
    <location>
        <begin position="469"/>
        <end position="488"/>
    </location>
</feature>
<feature type="region of interest" description="Disordered" evidence="6">
    <location>
        <begin position="498"/>
        <end position="548"/>
    </location>
</feature>
<feature type="region of interest" description="Disordered" evidence="6">
    <location>
        <begin position="727"/>
        <end position="768"/>
    </location>
</feature>
<feature type="region of interest" description="Disordered" evidence="6">
    <location>
        <begin position="793"/>
        <end position="821"/>
    </location>
</feature>
<feature type="region of interest" description="Disordered" evidence="6">
    <location>
        <begin position="876"/>
        <end position="915"/>
    </location>
</feature>
<feature type="region of interest" description="Disordered" evidence="6">
    <location>
        <begin position="1011"/>
        <end position="1067"/>
    </location>
</feature>
<feature type="region of interest" description="Disordered" evidence="6">
    <location>
        <begin position="1086"/>
        <end position="1133"/>
    </location>
</feature>
<feature type="region of interest" description="Disordered" evidence="6">
    <location>
        <begin position="1171"/>
        <end position="1263"/>
    </location>
</feature>
<feature type="region of interest" description="Disordered" evidence="6">
    <location>
        <begin position="1303"/>
        <end position="1324"/>
    </location>
</feature>
<feature type="region of interest" description="Disordered" evidence="6">
    <location>
        <begin position="1404"/>
        <end position="1467"/>
    </location>
</feature>
<feature type="region of interest" description="Disordered" evidence="6">
    <location>
        <begin position="1507"/>
        <end position="1538"/>
    </location>
</feature>
<feature type="coiled-coil region" evidence="3">
    <location>
        <begin position="1653"/>
        <end position="1708"/>
    </location>
</feature>
<feature type="compositionally biased region" description="Polar residues" evidence="6">
    <location>
        <begin position="147"/>
        <end position="161"/>
    </location>
</feature>
<feature type="compositionally biased region" description="Polar residues" evidence="6">
    <location>
        <begin position="230"/>
        <end position="240"/>
    </location>
</feature>
<feature type="compositionally biased region" description="Basic and acidic residues" evidence="6">
    <location>
        <begin position="245"/>
        <end position="259"/>
    </location>
</feature>
<feature type="compositionally biased region" description="Basic and acidic residues" evidence="6">
    <location>
        <begin position="357"/>
        <end position="366"/>
    </location>
</feature>
<feature type="compositionally biased region" description="Basic and acidic residues" evidence="6">
    <location>
        <begin position="476"/>
        <end position="488"/>
    </location>
</feature>
<feature type="compositionally biased region" description="Basic and acidic residues" evidence="6">
    <location>
        <begin position="793"/>
        <end position="808"/>
    </location>
</feature>
<feature type="compositionally biased region" description="Polar residues" evidence="6">
    <location>
        <begin position="893"/>
        <end position="903"/>
    </location>
</feature>
<feature type="compositionally biased region" description="Low complexity" evidence="6">
    <location>
        <begin position="904"/>
        <end position="915"/>
    </location>
</feature>
<feature type="compositionally biased region" description="Polar residues" evidence="6">
    <location>
        <begin position="1055"/>
        <end position="1067"/>
    </location>
</feature>
<feature type="compositionally biased region" description="Polar residues" evidence="6">
    <location>
        <begin position="1100"/>
        <end position="1124"/>
    </location>
</feature>
<feature type="compositionally biased region" description="Polar residues" evidence="6">
    <location>
        <begin position="1211"/>
        <end position="1263"/>
    </location>
</feature>
<feature type="compositionally biased region" description="Pro residues" evidence="6">
    <location>
        <begin position="1313"/>
        <end position="1323"/>
    </location>
</feature>
<feature type="compositionally biased region" description="Polar residues" evidence="6">
    <location>
        <begin position="1433"/>
        <end position="1451"/>
    </location>
</feature>
<feature type="compositionally biased region" description="Basic and acidic residues" evidence="6">
    <location>
        <begin position="1529"/>
        <end position="1538"/>
    </location>
</feature>
<sequence length="1788" mass="200726">MMQVSQGTIGSPWHQAYHSSSSTSDLSGYNHEFLRRSPDQYSSRGSMESLDQASAAYHHHLPPAKSTNCIDQLVHLHNKRDSAYSSFSTNASIPEYRSSPFSKERSYSMESMHSRNSSGQEGIKHADIKYIKTVYDVQRGISEEYEVNSSSVKNRNYSRQPAYNRHSIGPHGRLEQSRFFSESGGFERAAPMPPTRSDSYALTRHHERPNSWSSLDQNRNFRTPKAAGLHSTNTSSNAAQQPKHVHGDGHLHPVLERSPESSPLIKPKQVYSETPQPGQPMLPTGIYPVPAPEPHFAHAPQPPKNNNGRLYPALAKEGSYGAKSSEKVLPFSEPNKNEKDTQNLRSKSVGQYPMNHSVKEREKKQEGPTGFAHYKLHFTAGPDISTSSLTNDRNDQQPLRLDNIDINEQQKNGTKVAEEFSVYAHPAFQNEWSDSKTKQDIASSDIIGLHRNSLSSDAHGEHEYHNHFNIASSSHNKMDERSNRQADHRKKLESLSFTVHADEADGPSSNPLKPDESPSPSQKKSYDFTRRRLSSSSSQSSKTDGNKLSSVFDKVCKIEQREHENHRSQFLCGNINQSGLSTRGQNNKGSFTMVEEIRNKFISQDQTPNPNEWRRLSSSHSNEKVTGMHQLTRQGIVYGLQTGDAQKQMPEKQAEKMHSYNQEQNILQAVPDDDNRSFNSQTMPNKEDDWQCAAQDTLGFNRAYRNSVKDAQCKVLEATSYRRKDLEISPPHYKKPEKNVRPASAPFRKKSSSLSPHAPKERHSVTPTDNCASIQESQGVFFPSRIGAKRRITAEQKKRSYSEPEKMNEVGASESESAPLTVSKMEPVASFSENSVADRRRIFEREGKACSTINLSKPQLKQLQQNALADYIERKTGRRPSSQETRLLKERSQSTYFSGSIMDNQSMTSTSSMNSLNEHNLSYRHREPLSKTGRVSSTLPPGLTGFFDLSSFENNPEYPENRSRSSSFAHQLRSERLLDHRSKVEFGKGRETNKPKEVSLQSDDDVIITSSRRHGKSASAEDLLDRLPQPPALHVRSRSSPASDMKSREYMSRQEVGNKTSYASASNKEIRSIKSNHFEQMSFTPSFKNHIDTGEDPVPENSSTIQRSAQLENQRNTKTQSISGIYSPHPETKQEPLALPIHSVPAKVTQTSLAHATFDYITAEEYLYSGKRGKESASPTDNKEISDQEWCLPENSSSEDLNDPERFAKYTSAQRPQSFETKSGNSINETVQQNKSSGPTAGPKFSTSWKSNGMWSSGSSEAETTFNHGKISLHISESCLQPQSPMTGQEDEGDDEVFVKEQDTESFSGTFVPPSPPPFPPPSLEDALLKQRIEKFPLVPNTLDEIWENTEEASTQVKVKSNERYLQCASEYTASTESSGSYLLNSGITKRDTDGPLLRLSSIVPAPEPLASPVDPTKPIEEQETQPHGADTSILQSSEGNFNPSDSQSTLPHVRSELMSSEDAKSQELAKEIVTKDKSLANILDPDSRMKTTMDLMEGLFTKSSSALKEKNQKRKAKKQIDNIIAPESEXKEEKRETLDNASNYSAYYSTSAPKAELLRKMKTIHSQIGGKEEQFDVNEKKAELISSLTCKLEVLKDAKESLIDDIKLNNSLGEEVETQIETLCKPNEFDKYKMFIGDLDKVVNLLLSLSGRLARVENALSSLGEDASAEERKTWNEKKKQLCGQHEDARELKENLDRREKLVMDFLGNYLTGEEFAHYQHFVKMKSALLIEQRELDDKIKLGQEQLRCLTESLPSDYLISMKVSLPEERRSSLGNKSLPPPLTSSL</sequence>